<sequence length="24" mass="2499">FMGGLIKAATKIVPAAYCAITKKC</sequence>
<reference key="1">
    <citation type="journal article" date="2008" name="Toxicon">
        <title>Characterization of antimicrobial peptides from the skin secretions of the Malaysian frogs, Odorrana hosii and Hylarana picturata (Anura:Ranidae).</title>
        <authorList>
            <person name="Conlon J.M."/>
            <person name="Kolodziejek J."/>
            <person name="Nowotny N."/>
            <person name="Leprince J."/>
            <person name="Vaudry H."/>
            <person name="Coquet L."/>
            <person name="Jouenne T."/>
            <person name="King J.D."/>
        </authorList>
    </citation>
    <scope>PROTEIN SEQUENCE</scope>
    <scope>FUNCTION</scope>
    <scope>MASS SPECTROMETRY</scope>
    <source>
        <tissue>Skin secretion</tissue>
    </source>
</reference>
<keyword id="KW-0878">Amphibian defense peptide</keyword>
<keyword id="KW-0044">Antibiotic</keyword>
<keyword id="KW-0929">Antimicrobial</keyword>
<keyword id="KW-0903">Direct protein sequencing</keyword>
<keyword id="KW-1015">Disulfide bond</keyword>
<keyword id="KW-0964">Secreted</keyword>
<organism>
    <name type="scientific">Pulchrana picturata</name>
    <name type="common">Malaysian fire frog</name>
    <name type="synonym">Hylarana picturata</name>
    <dbReference type="NCBI Taxonomy" id="395594"/>
    <lineage>
        <taxon>Eukaryota</taxon>
        <taxon>Metazoa</taxon>
        <taxon>Chordata</taxon>
        <taxon>Craniata</taxon>
        <taxon>Vertebrata</taxon>
        <taxon>Euteleostomi</taxon>
        <taxon>Amphibia</taxon>
        <taxon>Batrachia</taxon>
        <taxon>Anura</taxon>
        <taxon>Neobatrachia</taxon>
        <taxon>Ranoidea</taxon>
        <taxon>Ranidae</taxon>
        <taxon>Pulchrana</taxon>
    </lineage>
</organism>
<proteinExistence type="evidence at protein level"/>
<protein>
    <recommendedName>
        <fullName>Brevinin-1PTa</fullName>
    </recommendedName>
</protein>
<dbReference type="GO" id="GO:0005576">
    <property type="term" value="C:extracellular region"/>
    <property type="evidence" value="ECO:0007669"/>
    <property type="project" value="UniProtKB-SubCell"/>
</dbReference>
<dbReference type="GO" id="GO:0042742">
    <property type="term" value="P:defense response to bacterium"/>
    <property type="evidence" value="ECO:0007669"/>
    <property type="project" value="UniProtKB-KW"/>
</dbReference>
<dbReference type="InterPro" id="IPR012520">
    <property type="entry name" value="Antimicrobial_frog_1"/>
</dbReference>
<dbReference type="Pfam" id="PF08018">
    <property type="entry name" value="Antimicrobial_1"/>
    <property type="match status" value="1"/>
</dbReference>
<name>BR1A_PULPI</name>
<feature type="peptide" id="PRO_0000366039" description="Brevinin-1PTa">
    <location>
        <begin position="1"/>
        <end position="24"/>
    </location>
</feature>
<feature type="disulfide bond">
    <location>
        <begin position="18"/>
        <end position="24"/>
    </location>
</feature>
<accession>P0C8T1</accession>
<comment type="function">
    <text evidence="1">Has antibacterial activity against the Gram-positive bacterium S.aureus ATCC 25923 (MIC=3 uM) and the Gram-negative bacterium E.coli ATCC 25726 (MIC=24 uM).</text>
</comment>
<comment type="subcellular location">
    <subcellularLocation>
        <location>Secreted</location>
    </subcellularLocation>
</comment>
<comment type="tissue specificity">
    <text>Expressed by the skin glands.</text>
</comment>
<comment type="mass spectrometry" mass="2495.7" method="MALDI" evidence="1"/>
<comment type="similarity">
    <text evidence="2">Belongs to the frog skin active peptide (FSAP) family. Brevinin subfamily.</text>
</comment>
<evidence type="ECO:0000269" key="1">
    <source>
    </source>
</evidence>
<evidence type="ECO:0000305" key="2"/>